<keyword id="KW-0002">3D-structure</keyword>
<keyword id="KW-0004">4Fe-4S</keyword>
<keyword id="KW-0106">Calcium</keyword>
<keyword id="KW-1015">Disulfide bond</keyword>
<keyword id="KW-0249">Electron transport</keyword>
<keyword id="KW-0408">Iron</keyword>
<keyword id="KW-0411">Iron-sulfur</keyword>
<keyword id="KW-0479">Metal-binding</keyword>
<keyword id="KW-0520">NAD</keyword>
<keyword id="KW-0560">Oxidoreductase</keyword>
<keyword id="KW-0574">Periplasm</keyword>
<keyword id="KW-0712">Selenocysteine</keyword>
<keyword id="KW-0732">Signal</keyword>
<keyword id="KW-0813">Transport</keyword>
<keyword id="KW-0826">Tungsten</keyword>
<feature type="signal peptide" description="Tat-type signal">
    <location>
        <begin position="1"/>
        <end position="35"/>
    </location>
</feature>
<feature type="chain" id="PRO_0000019149" description="Formate dehydrogenase subunit alpha">
    <location>
        <begin position="36"/>
        <end position="1012"/>
    </location>
</feature>
<feature type="domain" description="4Fe-4S Mo/W bis-MGD-type" evidence="1">
    <location>
        <begin position="45"/>
        <end position="103"/>
    </location>
</feature>
<feature type="binding site" evidence="1 4 8">
    <location>
        <position position="52"/>
    </location>
    <ligand>
        <name>[4Fe-4S] cluster</name>
        <dbReference type="ChEBI" id="CHEBI:49883"/>
    </ligand>
</feature>
<feature type="binding site" evidence="1 4 8">
    <location>
        <position position="55"/>
    </location>
    <ligand>
        <name>[4Fe-4S] cluster</name>
        <dbReference type="ChEBI" id="CHEBI:49883"/>
    </ligand>
</feature>
<feature type="binding site" evidence="1 4 8">
    <location>
        <position position="59"/>
    </location>
    <ligand>
        <name>[4Fe-4S] cluster</name>
        <dbReference type="ChEBI" id="CHEBI:49883"/>
    </ligand>
</feature>
<feature type="binding site" evidence="1 4 8">
    <location>
        <position position="89"/>
    </location>
    <ligand>
        <name>[4Fe-4S] cluster</name>
        <dbReference type="ChEBI" id="CHEBI:49883"/>
    </ligand>
</feature>
<feature type="binding site" evidence="4">
    <location>
        <position position="193"/>
    </location>
    <ligand>
        <name>W-bis(molybdopterin guanine dinucleotide)</name>
        <dbReference type="ChEBI" id="CHEBI:60537"/>
    </ligand>
    <ligandPart>
        <name>W</name>
        <dbReference type="ChEBI" id="CHEBI:27998"/>
    </ligandPart>
</feature>
<feature type="binding site" evidence="8">
    <location>
        <position position="393"/>
    </location>
    <ligand>
        <name>Ca(2+)</name>
        <dbReference type="ChEBI" id="CHEBI:29108"/>
    </ligand>
</feature>
<feature type="binding site" evidence="8">
    <location>
        <position position="395"/>
    </location>
    <ligand>
        <name>Ca(2+)</name>
        <dbReference type="ChEBI" id="CHEBI:29108"/>
    </ligand>
</feature>
<feature type="binding site" evidence="8">
    <location>
        <position position="398"/>
    </location>
    <ligand>
        <name>Ca(2+)</name>
        <dbReference type="ChEBI" id="CHEBI:29108"/>
    </ligand>
</feature>
<feature type="binding site" evidence="8">
    <location>
        <position position="428"/>
    </location>
    <ligand>
        <name>Ca(2+)</name>
        <dbReference type="ChEBI" id="CHEBI:29108"/>
    </ligand>
</feature>
<feature type="binding site" evidence="8">
    <location>
        <position position="430"/>
    </location>
    <ligand>
        <name>Ca(2+)</name>
        <dbReference type="ChEBI" id="CHEBI:29108"/>
    </ligand>
</feature>
<feature type="non-standard amino acid" description="Selenocysteine" evidence="4">
    <location>
        <position position="193"/>
    </location>
</feature>
<feature type="disulfide bond" evidence="4">
    <location>
        <begin position="852"/>
        <end position="879"/>
    </location>
</feature>
<feature type="turn" evidence="9">
    <location>
        <begin position="41"/>
        <end position="44"/>
    </location>
</feature>
<feature type="strand" evidence="9">
    <location>
        <begin position="45"/>
        <end position="51"/>
    </location>
</feature>
<feature type="strand" evidence="9">
    <location>
        <begin position="53"/>
        <end position="55"/>
    </location>
</feature>
<feature type="strand" evidence="9">
    <location>
        <begin position="60"/>
        <end position="65"/>
    </location>
</feature>
<feature type="turn" evidence="9">
    <location>
        <begin position="67"/>
        <end position="69"/>
    </location>
</feature>
<feature type="strand" evidence="9">
    <location>
        <begin position="72"/>
        <end position="77"/>
    </location>
</feature>
<feature type="turn" evidence="9">
    <location>
        <begin position="82"/>
        <end position="86"/>
    </location>
</feature>
<feature type="helix" evidence="9">
    <location>
        <begin position="90"/>
        <end position="93"/>
    </location>
</feature>
<feature type="helix" evidence="9">
    <location>
        <begin position="95"/>
        <end position="99"/>
    </location>
</feature>
<feature type="strand" evidence="9">
    <location>
        <begin position="109"/>
        <end position="111"/>
    </location>
</feature>
<feature type="helix" evidence="9">
    <location>
        <begin position="123"/>
        <end position="141"/>
    </location>
</feature>
<feature type="strand" evidence="9">
    <location>
        <begin position="142"/>
        <end position="145"/>
    </location>
</feature>
<feature type="strand" evidence="9">
    <location>
        <begin position="151"/>
        <end position="155"/>
    </location>
</feature>
<feature type="strand" evidence="9">
    <location>
        <begin position="157"/>
        <end position="161"/>
    </location>
</feature>
<feature type="helix" evidence="9">
    <location>
        <begin position="168"/>
        <end position="180"/>
    </location>
</feature>
<feature type="helix" evidence="9">
    <location>
        <begin position="190"/>
        <end position="193"/>
    </location>
</feature>
<feature type="helix" evidence="9">
    <location>
        <begin position="195"/>
        <end position="205"/>
    </location>
</feature>
<feature type="helix" evidence="9">
    <location>
        <begin position="215"/>
        <end position="219"/>
    </location>
</feature>
<feature type="strand" evidence="9">
    <location>
        <begin position="221"/>
        <end position="227"/>
    </location>
</feature>
<feature type="helix" evidence="9">
    <location>
        <begin position="230"/>
        <end position="233"/>
    </location>
</feature>
<feature type="helix" evidence="9">
    <location>
        <begin position="237"/>
        <end position="246"/>
    </location>
</feature>
<feature type="strand" evidence="9">
    <location>
        <begin position="250"/>
        <end position="254"/>
    </location>
</feature>
<feature type="helix" evidence="9">
    <location>
        <begin position="262"/>
        <end position="264"/>
    </location>
</feature>
<feature type="strand" evidence="9">
    <location>
        <begin position="266"/>
        <end position="269"/>
    </location>
</feature>
<feature type="helix" evidence="9">
    <location>
        <begin position="276"/>
        <end position="289"/>
    </location>
</feature>
<feature type="helix" evidence="9">
    <location>
        <begin position="295"/>
        <end position="301"/>
    </location>
</feature>
<feature type="helix" evidence="9">
    <location>
        <begin position="303"/>
        <end position="305"/>
    </location>
</feature>
<feature type="strand" evidence="9">
    <location>
        <begin position="306"/>
        <end position="308"/>
    </location>
</feature>
<feature type="turn" evidence="9">
    <location>
        <begin position="324"/>
        <end position="327"/>
    </location>
</feature>
<feature type="helix" evidence="9">
    <location>
        <begin position="331"/>
        <end position="334"/>
    </location>
</feature>
<feature type="helix" evidence="9">
    <location>
        <begin position="356"/>
        <end position="364"/>
    </location>
</feature>
<feature type="helix" evidence="9">
    <location>
        <begin position="369"/>
        <end position="376"/>
    </location>
</feature>
<feature type="helix" evidence="9">
    <location>
        <begin position="380"/>
        <end position="391"/>
    </location>
</feature>
<feature type="helix" evidence="9">
    <location>
        <begin position="392"/>
        <end position="394"/>
    </location>
</feature>
<feature type="strand" evidence="9">
    <location>
        <begin position="400"/>
        <end position="404"/>
    </location>
</feature>
<feature type="helix" evidence="9">
    <location>
        <begin position="411"/>
        <end position="427"/>
    </location>
</feature>
<feature type="strand" evidence="9">
    <location>
        <begin position="431"/>
        <end position="433"/>
    </location>
</feature>
<feature type="strand" evidence="9">
    <location>
        <begin position="437"/>
        <end position="440"/>
    </location>
</feature>
<feature type="helix" evidence="9">
    <location>
        <begin position="447"/>
        <end position="452"/>
    </location>
</feature>
<feature type="turn" evidence="9">
    <location>
        <begin position="461"/>
        <end position="463"/>
    </location>
</feature>
<feature type="helix" evidence="9">
    <location>
        <begin position="474"/>
        <end position="481"/>
    </location>
</feature>
<feature type="helix" evidence="9">
    <location>
        <begin position="493"/>
        <end position="496"/>
    </location>
</feature>
<feature type="helix" evidence="9">
    <location>
        <begin position="497"/>
        <end position="508"/>
    </location>
</feature>
<feature type="helix" evidence="9">
    <location>
        <begin position="514"/>
        <end position="520"/>
    </location>
</feature>
<feature type="helix" evidence="9">
    <location>
        <begin position="532"/>
        <end position="540"/>
    </location>
</feature>
<feature type="strand" evidence="9">
    <location>
        <begin position="546"/>
        <end position="551"/>
    </location>
</feature>
<feature type="helix" evidence="9">
    <location>
        <begin position="554"/>
        <end position="557"/>
    </location>
</feature>
<feature type="strand" evidence="9">
    <location>
        <begin position="558"/>
        <end position="560"/>
    </location>
</feature>
<feature type="helix" evidence="9">
    <location>
        <begin position="561"/>
        <end position="568"/>
    </location>
</feature>
<feature type="strand" evidence="9">
    <location>
        <begin position="572"/>
        <end position="580"/>
    </location>
</feature>
<feature type="turn" evidence="9">
    <location>
        <begin position="583"/>
        <end position="586"/>
    </location>
</feature>
<feature type="helix" evidence="9">
    <location>
        <begin position="587"/>
        <end position="589"/>
    </location>
</feature>
<feature type="helix" evidence="9">
    <location>
        <begin position="595"/>
        <end position="597"/>
    </location>
</feature>
<feature type="strand" evidence="9">
    <location>
        <begin position="601"/>
        <end position="607"/>
    </location>
</feature>
<feature type="helix" evidence="9">
    <location>
        <begin position="610"/>
        <end position="612"/>
    </location>
</feature>
<feature type="strand" evidence="9">
    <location>
        <begin position="615"/>
        <end position="618"/>
    </location>
</feature>
<feature type="strand" evidence="9">
    <location>
        <begin position="623"/>
        <end position="627"/>
    </location>
</feature>
<feature type="helix" evidence="9">
    <location>
        <begin position="640"/>
        <end position="657"/>
    </location>
</feature>
<feature type="helix" evidence="9">
    <location>
        <begin position="664"/>
        <end position="668"/>
    </location>
</feature>
<feature type="helix" evidence="9">
    <location>
        <begin position="671"/>
        <end position="674"/>
    </location>
</feature>
<feature type="helix" evidence="9">
    <location>
        <begin position="683"/>
        <end position="691"/>
    </location>
</feature>
<feature type="strand" evidence="9">
    <location>
        <begin position="693"/>
        <end position="696"/>
    </location>
</feature>
<feature type="strand" evidence="9">
    <location>
        <begin position="698"/>
        <end position="700"/>
    </location>
</feature>
<feature type="strand" evidence="9">
    <location>
        <begin position="703"/>
        <end position="705"/>
    </location>
</feature>
<feature type="helix" evidence="9">
    <location>
        <begin position="714"/>
        <end position="716"/>
    </location>
</feature>
<feature type="helix" evidence="9">
    <location>
        <begin position="728"/>
        <end position="730"/>
    </location>
</feature>
<feature type="strand" evidence="9">
    <location>
        <begin position="733"/>
        <end position="735"/>
    </location>
</feature>
<feature type="helix" evidence="9">
    <location>
        <begin position="740"/>
        <end position="742"/>
    </location>
</feature>
<feature type="helix" evidence="9">
    <location>
        <begin position="750"/>
        <end position="755"/>
    </location>
</feature>
<feature type="strand" evidence="9">
    <location>
        <begin position="761"/>
        <end position="764"/>
    </location>
</feature>
<feature type="turn" evidence="9">
    <location>
        <begin position="765"/>
        <end position="768"/>
    </location>
</feature>
<feature type="helix" evidence="9">
    <location>
        <begin position="774"/>
        <end position="777"/>
    </location>
</feature>
<feature type="helix" evidence="9">
    <location>
        <begin position="787"/>
        <end position="789"/>
    </location>
</feature>
<feature type="strand" evidence="9">
    <location>
        <begin position="791"/>
        <end position="795"/>
    </location>
</feature>
<feature type="turn" evidence="9">
    <location>
        <begin position="796"/>
        <end position="799"/>
    </location>
</feature>
<feature type="strand" evidence="9">
    <location>
        <begin position="800"/>
        <end position="804"/>
    </location>
</feature>
<feature type="turn" evidence="9">
    <location>
        <begin position="816"/>
        <end position="818"/>
    </location>
</feature>
<feature type="strand" evidence="9">
    <location>
        <begin position="826"/>
        <end position="829"/>
    </location>
</feature>
<feature type="strand" evidence="9">
    <location>
        <begin position="851"/>
        <end position="853"/>
    </location>
</feature>
<feature type="strand" evidence="9">
    <location>
        <begin position="885"/>
        <end position="890"/>
    </location>
</feature>
<feature type="helix" evidence="9">
    <location>
        <begin position="900"/>
        <end position="903"/>
    </location>
</feature>
<feature type="helix" evidence="9">
    <location>
        <begin position="906"/>
        <end position="911"/>
    </location>
</feature>
<feature type="strand" evidence="9">
    <location>
        <begin position="916"/>
        <end position="919"/>
    </location>
</feature>
<feature type="helix" evidence="9">
    <location>
        <begin position="921"/>
        <end position="927"/>
    </location>
</feature>
<feature type="strand" evidence="9">
    <location>
        <begin position="934"/>
        <end position="939"/>
    </location>
</feature>
<feature type="strand" evidence="9">
    <location>
        <begin position="942"/>
        <end position="950"/>
    </location>
</feature>
<feature type="strand" evidence="9">
    <location>
        <begin position="957"/>
        <end position="959"/>
    </location>
</feature>
<feature type="strand" evidence="9">
    <location>
        <begin position="962"/>
        <end position="964"/>
    </location>
</feature>
<feature type="strand" evidence="9">
    <location>
        <begin position="966"/>
        <end position="971"/>
    </location>
</feature>
<feature type="helix" evidence="9">
    <location>
        <begin position="985"/>
        <end position="987"/>
    </location>
</feature>
<feature type="strand" evidence="9">
    <location>
        <begin position="991"/>
        <end position="994"/>
    </location>
</feature>
<feature type="strand" evidence="9">
    <location>
        <begin position="996"/>
        <end position="1000"/>
    </location>
</feature>
<feature type="strand" evidence="9">
    <location>
        <begin position="1005"/>
        <end position="1011"/>
    </location>
</feature>
<organism evidence="7">
    <name type="scientific">Megalodesulfovibrio gigas</name>
    <name type="common">Desulfovibrio gigas</name>
    <dbReference type="NCBI Taxonomy" id="879"/>
    <lineage>
        <taxon>Bacteria</taxon>
        <taxon>Pseudomonadati</taxon>
        <taxon>Thermodesulfobacteriota</taxon>
        <taxon>Desulfovibrionia</taxon>
        <taxon>Desulfovibrionales</taxon>
        <taxon>Desulfovibrionaceae</taxon>
        <taxon>Megalodesulfovibrio</taxon>
    </lineage>
</organism>
<reference evidence="8" key="1">
    <citation type="journal article" date="2002" name="Structure">
        <title>Gene sequence and the 1.8 A crystal structure of the tungsten-containing formate dehydrogenase from Desulfovibrio gigas.</title>
        <authorList>
            <person name="Raaijmakers H."/>
            <person name="Macieira S.I.M.G."/>
            <person name="Dias J.M."/>
            <person name="Teixeira S."/>
            <person name="Bursakov S."/>
            <person name="Huber R."/>
            <person name="Moura J.J.G."/>
            <person name="Moura I."/>
            <person name="Romao M.J."/>
        </authorList>
    </citation>
    <scope>NUCLEOTIDE SEQUENCE [GENOMIC DNA]</scope>
    <scope>SUBUNIT</scope>
    <scope>COFACTOR</scope>
    <scope>DISULFIDE BOND</scope>
    <scope>CALCIUM-BINDING</scope>
    <scope>METAL-BINDING</scope>
    <scope>X-RAY CRYSTALLOGRAPHY (1.8 ANGSTROMS) IN COMPLEX WITH FDHB</scope>
    <source>
        <strain>ATCC 19364 / DSM 1382 / NCIB 9332 / VKM B-1759</strain>
    </source>
</reference>
<reference evidence="6" key="2">
    <citation type="journal article" date="1986" name="Can. J. Microbiol.">
        <title>Properties of formate dehydrogenase from Desulfivibrio gigas.</title>
        <authorList>
            <person name="Riederer-Henderson M.A."/>
            <person name="Peck H.D. Jr."/>
        </authorList>
    </citation>
    <scope>CHARACTERIZATION</scope>
</reference>
<reference evidence="6" key="3">
    <citation type="journal article" date="1999" name="Biochemistry">
        <title>Purification and characterization of a tungsten-containing formate dehydrogenase from Desulfovibrio gigas.</title>
        <authorList>
            <person name="Almendra M.J."/>
            <person name="Brondino C.D."/>
            <person name="Gavel O."/>
            <person name="Pereira A.S."/>
            <person name="Tavares P."/>
            <person name="Bursakov S."/>
            <person name="Duarte R."/>
            <person name="Caldeira J."/>
            <person name="Moura J.J.G."/>
            <person name="Moura I."/>
        </authorList>
    </citation>
    <scope>CHARACTERIZATION</scope>
    <scope>SUBUNIT</scope>
    <source>
        <strain>ATCC 19364 / DSM 1382 / NCIB 9332 / VKM B-1759</strain>
    </source>
</reference>
<reference evidence="6" key="4">
    <citation type="journal article" date="2001" name="J. Biol. Inorg. Chem.">
        <title>Tungsten-containing formate dehydrogenase from Desulfovibrio gigas: metal identification and preliminary structural data by multi-wavelength crystallography.</title>
        <authorList>
            <person name="Raaijmakers H."/>
            <person name="Teixeira S."/>
            <person name="Dias J.M."/>
            <person name="Almendra M.J."/>
            <person name="Brondino C.D."/>
            <person name="Moura I."/>
            <person name="Moura J.J.G."/>
            <person name="Romao M.J."/>
        </authorList>
    </citation>
    <scope>COFACTOR</scope>
    <scope>SUBUNIT</scope>
</reference>
<protein>
    <recommendedName>
        <fullName>Formate dehydrogenase subunit alpha</fullName>
        <shortName>FDH subunit alpha</shortName>
        <ecNumber>1.17.1.9</ecNumber>
    </recommendedName>
    <alternativeName>
        <fullName>Formate dehydrogenase large subunit</fullName>
    </alternativeName>
</protein>
<gene>
    <name evidence="5" type="primary">fdhA</name>
</gene>
<proteinExistence type="evidence at protein level"/>
<accession>Q934F5</accession>
<evidence type="ECO:0000255" key="1">
    <source>
        <dbReference type="PROSITE-ProRule" id="PRU01004"/>
    </source>
</evidence>
<evidence type="ECO:0000269" key="2">
    <source>
    </source>
</evidence>
<evidence type="ECO:0000269" key="3">
    <source>
    </source>
</evidence>
<evidence type="ECO:0000269" key="4">
    <source>
    </source>
</evidence>
<evidence type="ECO:0000303" key="5">
    <source>
    </source>
</evidence>
<evidence type="ECO:0000305" key="6"/>
<evidence type="ECO:0000312" key="7">
    <source>
        <dbReference type="EMBL" id="CAC86667.1"/>
    </source>
</evidence>
<evidence type="ECO:0007744" key="8">
    <source>
        <dbReference type="PDB" id="1H0H"/>
    </source>
</evidence>
<evidence type="ECO:0007829" key="9">
    <source>
        <dbReference type="PDB" id="1H0H"/>
    </source>
</evidence>
<name>FDHA_MEGGA</name>
<sequence length="1012" mass="113271">MLIKRRAFLKLTAAGATLSAFGGLGVDLAPAKAQAATMALKTVDAKQTTSVCCYCSVGCGLIVHTDKKTNRAINVEGDPDHPINEGSLCAKGASTWQLAENERRPANPLYRAPGSDQWEEKSWDWMLDTIAERVAKTREATFVTKNAKGQVVNRCDGIASVGSAAMDNEECWIYQAWLRSLGLFYIEHQARIUHSATVAALAESYGRGAMTNHWIDLKNSDVILMMGSNPAENHPISFKWVMRAKDKGATLIHVDPRYTRTSTKCDLYAPLRSGSDIAFLNGMTKYILEKELYFKDYVVNYTNASFIVGEGFAFEEGLFAGYNKETRKYDKSKWGFERDENGNPKRDETLKHPRCVFQIMKKHYERYDLDKISAICGTPKELILKVYDAYCATGKPDKAGTIMYAMGWTQHTVGVQNIRAMSINQLLLGNIGVAGGGVNALRGEANVQGSTDHGLLMHIYPGYLGTARASIPTYEEYTKKFTPVSKDPQSANWWSNFPKYSASYIKSMWPDADLNEAYGYLPKGEDGKDYSWLTLFDDMFQGKIKGFFAWGQNPACSGANSNKTREALTKLDWMVNVNIFDNETGSFWRGPDMDPKKIKTEVFFLPCAVAIEKEGSISNSGRWMQWRYVGPEPRKNAIPDGDLIVELAKRVQKLLAKTPGKLAAPVTKLKTDYWVNDHGHFDPHKIAKLINGFALKDFKVGDVEYKAGQQIATFGHLQADGSTTSGCWIYTGSYTEKGNMAARRDKTQTDMQAKIGLYPGWTWAWPVNRRIIYNRASVDLNGKPYAPEKAVVEWNAAEKKWVGDVPDGPWPPQADKEKGKRAFIMKPEGYAYLYGPGREDGPLPEYYEPMECPVIEHPFSKTLHNPTALHFATEEKAVCDPRYPFICSTYRVTEHWQTGLMTRNTPWLLEAEPQMFCEMSEELATLRGIKNGDKVILESVRGKLWAKAIITKRIKPFAIQGQQVHMVGIPWHYGWSFPKNGGDAANILTPSVGDPNTGIPETKAFMVNVTKA</sequence>
<comment type="function">
    <text>Alpha chain of the formate dehydrogenase (FDH) catalyze the reversible two-electron oxidation of formate to carbon dioxide. FDH loses activity in the presence of air, but this activity can be restored. The alpha subunit of formate dehydrogenase forms the active site.</text>
</comment>
<comment type="catalytic activity">
    <reaction evidence="6">
        <text>formate + NAD(+) = CO2 + NADH</text>
        <dbReference type="Rhea" id="RHEA:15985"/>
        <dbReference type="ChEBI" id="CHEBI:15740"/>
        <dbReference type="ChEBI" id="CHEBI:16526"/>
        <dbReference type="ChEBI" id="CHEBI:57540"/>
        <dbReference type="ChEBI" id="CHEBI:57945"/>
        <dbReference type="EC" id="1.17.1.9"/>
    </reaction>
</comment>
<comment type="cofactor">
    <cofactor>
        <name>[4Fe-4S] cluster</name>
        <dbReference type="ChEBI" id="CHEBI:49883"/>
    </cofactor>
    <text>Binds 1 [4Fe-4S] cluster per subunit.</text>
</comment>
<comment type="cofactor">
    <cofactor>
        <name>W-bis(molybdopterin guanine dinucleotide)</name>
        <dbReference type="ChEBI" id="CHEBI:60537"/>
    </cofactor>
    <text>Binds 1 W-bis(molybdopterin guanine dinucleotide) (W-bis-MGD) cofactor per subunit.</text>
</comment>
<comment type="biophysicochemical properties">
    <phDependence>
        <text>Optimum pH is 7.5-8.0.</text>
    </phDependence>
    <temperatureDependence>
        <text>Optimum temperature is 56 degrees Celsius.</text>
    </temperatureDependence>
</comment>
<comment type="subunit">
    <text evidence="2 3 4">Heterodimer of alpha (FdhA) and beta (FdhB) subunits.</text>
</comment>
<comment type="subcellular location">
    <subcellularLocation>
        <location>Periplasm</location>
    </subcellularLocation>
</comment>
<comment type="PTM">
    <text evidence="5">The disulfide bond is likely to be broken in the active form of this enzyme.</text>
</comment>
<comment type="PTM">
    <text>Predicted to be exported by the Tat system. The position of the signal peptide cleavage has been experimentally proven.</text>
</comment>
<comment type="similarity">
    <text evidence="6">Belongs to the prokaryotic molybdopterin-containing oxidoreductase family.</text>
</comment>
<dbReference type="EC" id="1.17.1.9"/>
<dbReference type="EMBL" id="AJ318781">
    <property type="protein sequence ID" value="CAC86667.1"/>
    <property type="molecule type" value="Genomic_DNA"/>
</dbReference>
<dbReference type="PDB" id="1H0H">
    <property type="method" value="X-ray"/>
    <property type="resolution" value="1.80 A"/>
    <property type="chains" value="A/K=36-1012"/>
</dbReference>
<dbReference type="PDBsum" id="1H0H"/>
<dbReference type="SMR" id="Q934F5"/>
<dbReference type="OMA" id="QYFEMMN"/>
<dbReference type="EvolutionaryTrace" id="Q934F5"/>
<dbReference type="GO" id="GO:0042597">
    <property type="term" value="C:periplasmic space"/>
    <property type="evidence" value="ECO:0007669"/>
    <property type="project" value="UniProtKB-SubCell"/>
</dbReference>
<dbReference type="GO" id="GO:0051539">
    <property type="term" value="F:4 iron, 4 sulfur cluster binding"/>
    <property type="evidence" value="ECO:0007669"/>
    <property type="project" value="UniProtKB-KW"/>
</dbReference>
<dbReference type="GO" id="GO:0009055">
    <property type="term" value="F:electron transfer activity"/>
    <property type="evidence" value="ECO:0007669"/>
    <property type="project" value="InterPro"/>
</dbReference>
<dbReference type="GO" id="GO:0047111">
    <property type="term" value="F:formate dehydrogenase (cytochrome-c-553) activity"/>
    <property type="evidence" value="ECO:0007669"/>
    <property type="project" value="InterPro"/>
</dbReference>
<dbReference type="GO" id="GO:0008863">
    <property type="term" value="F:formate dehydrogenase (NAD+) activity"/>
    <property type="evidence" value="ECO:0007669"/>
    <property type="project" value="UniProtKB-EC"/>
</dbReference>
<dbReference type="GO" id="GO:0030151">
    <property type="term" value="F:molybdenum ion binding"/>
    <property type="evidence" value="ECO:0007669"/>
    <property type="project" value="TreeGrafter"/>
</dbReference>
<dbReference type="GO" id="GO:0043546">
    <property type="term" value="F:molybdopterin cofactor binding"/>
    <property type="evidence" value="ECO:0007669"/>
    <property type="project" value="InterPro"/>
</dbReference>
<dbReference type="GO" id="GO:0009061">
    <property type="term" value="P:anaerobic respiration"/>
    <property type="evidence" value="ECO:0007669"/>
    <property type="project" value="TreeGrafter"/>
</dbReference>
<dbReference type="CDD" id="cd02792">
    <property type="entry name" value="MopB_CT_Formate-Dh-Na-like"/>
    <property type="match status" value="1"/>
</dbReference>
<dbReference type="CDD" id="cd02752">
    <property type="entry name" value="MopB_Formate-Dh-Na-like"/>
    <property type="match status" value="1"/>
</dbReference>
<dbReference type="FunFam" id="3.40.228.10:FF:000009">
    <property type="entry name" value="Formate dehydrogenase, alpha subunit, selenocysteine-containing"/>
    <property type="match status" value="1"/>
</dbReference>
<dbReference type="Gene3D" id="2.40.40.20">
    <property type="match status" value="1"/>
</dbReference>
<dbReference type="Gene3D" id="3.30.200.210">
    <property type="match status" value="1"/>
</dbReference>
<dbReference type="Gene3D" id="3.40.50.740">
    <property type="match status" value="1"/>
</dbReference>
<dbReference type="Gene3D" id="3.40.228.10">
    <property type="entry name" value="Dimethylsulfoxide Reductase, domain 2"/>
    <property type="match status" value="2"/>
</dbReference>
<dbReference type="InterPro" id="IPR009010">
    <property type="entry name" value="Asp_de-COase-like_dom_sf"/>
</dbReference>
<dbReference type="InterPro" id="IPR006443">
    <property type="entry name" value="Formate-DH-alph_fdnG"/>
</dbReference>
<dbReference type="InterPro" id="IPR006657">
    <property type="entry name" value="MoPterin_dinucl-bd_dom"/>
</dbReference>
<dbReference type="InterPro" id="IPR006656">
    <property type="entry name" value="Mopterin_OxRdtase"/>
</dbReference>
<dbReference type="InterPro" id="IPR006963">
    <property type="entry name" value="Mopterin_OxRdtase_4Fe-4S_dom"/>
</dbReference>
<dbReference type="InterPro" id="IPR006655">
    <property type="entry name" value="Mopterin_OxRdtase_prok_CS"/>
</dbReference>
<dbReference type="InterPro" id="IPR027467">
    <property type="entry name" value="MopterinOxRdtase_cofactor_BS"/>
</dbReference>
<dbReference type="InterPro" id="IPR006311">
    <property type="entry name" value="TAT_signal"/>
</dbReference>
<dbReference type="NCBIfam" id="TIGR01553">
    <property type="entry name" value="formate-DH-alph"/>
    <property type="match status" value="1"/>
</dbReference>
<dbReference type="PANTHER" id="PTHR43598:SF1">
    <property type="entry name" value="FORMATE DEHYDROGENASE-O MAJOR SUBUNIT"/>
    <property type="match status" value="1"/>
</dbReference>
<dbReference type="PANTHER" id="PTHR43598">
    <property type="entry name" value="TUNGSTEN-CONTAINING FORMYLMETHANOFURAN DEHYDROGENASE 2 SUBUNIT B"/>
    <property type="match status" value="1"/>
</dbReference>
<dbReference type="Pfam" id="PF04879">
    <property type="entry name" value="Molybdop_Fe4S4"/>
    <property type="match status" value="1"/>
</dbReference>
<dbReference type="Pfam" id="PF00384">
    <property type="entry name" value="Molybdopterin"/>
    <property type="match status" value="2"/>
</dbReference>
<dbReference type="Pfam" id="PF01568">
    <property type="entry name" value="Molydop_binding"/>
    <property type="match status" value="1"/>
</dbReference>
<dbReference type="SMART" id="SM00926">
    <property type="entry name" value="Molybdop_Fe4S4"/>
    <property type="match status" value="1"/>
</dbReference>
<dbReference type="SUPFAM" id="SSF50692">
    <property type="entry name" value="ADC-like"/>
    <property type="match status" value="1"/>
</dbReference>
<dbReference type="SUPFAM" id="SSF53706">
    <property type="entry name" value="Formate dehydrogenase/DMSO reductase, domains 1-3"/>
    <property type="match status" value="1"/>
</dbReference>
<dbReference type="PROSITE" id="PS51669">
    <property type="entry name" value="4FE4S_MOW_BIS_MGD"/>
    <property type="match status" value="1"/>
</dbReference>
<dbReference type="PROSITE" id="PS00551">
    <property type="entry name" value="MOLYBDOPTERIN_PROK_1"/>
    <property type="match status" value="1"/>
</dbReference>
<dbReference type="PROSITE" id="PS00932">
    <property type="entry name" value="MOLYBDOPTERIN_PROK_3"/>
    <property type="match status" value="1"/>
</dbReference>
<dbReference type="PROSITE" id="PS51318">
    <property type="entry name" value="TAT"/>
    <property type="match status" value="1"/>
</dbReference>